<sequence length="1508" mass="173965">MFRNILSWFDSTPQPPPQQQEQQPEQPLEPPKVVSKNEARILTDQLPAPDSQRSQRYDRINNNKNNNNSNVDPLGNKDIFSSSPSTSTTTTTKSSSTTTTTTTSSSSNKQQPLYEDEPPLIVHELTSKGKRPPSPIFKEESSSQLILDTWEINSSDDESNSKNDFKGFMSQLESSNLNEKYITSNIYQKYEFFQKRDSEEDLFPSPEPIKKKQSNDLEKNIFDDDDDDDIFKNKQSTVTKPKQPQQQQKQPIVKKKVEEESLFGDSSLSLDSPLLASKSSPPKSSVNLSPQLFKEDSFDIDSFLSNDFDFKSKKSNNTTTVKKAVPISKSKPQQPPQKEEIKEVSTQKDNSNSNNNNGWVSVDEKPKERSTSKSKIGIQKTVTVKSNNSFENDIFGSTTTNDDGGDNDFSFTPATTPSSSSSTKATTTSPSSTTTTKSNINIGQKSNKSVDQADQFLNDIFQQEEQDKKRREEEAKLKQQQKQKEKEQIKDEIDDLFKFSKPTTTTTSTPSKSTTSIVDINSIEKKFSKSAANATTTNNDNNNNNNNTSSPTNKSTNLFNDWEKEEEIKVKEELDKKKKIEQEKKLEQEKKLIEEKKRIAEEKRISDEILAKKQLAEKLEKERIEKELEDLRLAKELEEKRLLALRQEKELAEKLKRERLEKEAEDKRIAQEIERKRLEKEKQDQLEKQRKLEQQRLQKEKDEKELADRLEKERIENEIKEKQKQLEKIKLEKELAEKKEKERLQKEADEKRIADQLEFERLLKLKQEKELAEKLEKERLEKEAAAEEKRIAAEKLEKQRLEKEAEEKRIAQDLERKRLEKEAEEKRIAQDLERKRLEKEAEEKRIAAEKLKQQQELAAKLEKERLEKEAEEKRIAQEKRIAEENRIAQEKKIAEELEKKRLQKEEQDRLAAAELERKRLEKEAEEKRIAQELEKKRLEKEAAEVKRIADEAAAAAKLEKERLEKEAEEKRIADEAAAAAKLEKERLEKEAAAAEEKRIADEAAAEAKLEKERLEKEKRIADEAAAEAAAALLQQKIEKEKEERDRIAKENKELKEKEDKERKEQRQRERQEKEQERARALKEKIEKEKERLNQQKLDQEKEEREREQRERKEQQEREENEKQLEKEREEKERREKLKQRNEQLEKERQERFKKDQEEKEKQLKEQQQQQKVIIPTTTTTTIRERSNSDSDALLNLPDSASSSSHSELVHLTLGRSKAKGRKKPTRRELTKDGNRNKQNIPNLKELKPSTVIIPDDDDDQSQKQQSEEVEEKPVAVKKMPIGFNPGMMMPKFDPSAVKLKSSAKPPSTNTTTTTTTAPQQPVQFNLKPVALKPTVTQTTTTTTTPPTTPPSSSVQLKPAATRSFSGSSFMGINSTTPTTPPTTPPSLKKSAAKDAGMKALDVLLQWLKDQTAGYEGVNIKDFTSSWYDGIAYLALVHRFKPSLIGDWKSFPKNDRVANYKLAFSLAEKHLGVTAFIDADDLAQLPSMERLSNITYLSEFFKVMKRGGF</sequence>
<reference key="1">
    <citation type="journal article" date="2002" name="Nature">
        <title>Sequence and analysis of chromosome 2 of Dictyostelium discoideum.</title>
        <authorList>
            <person name="Gloeckner G."/>
            <person name="Eichinger L."/>
            <person name="Szafranski K."/>
            <person name="Pachebat J.A."/>
            <person name="Bankier A.T."/>
            <person name="Dear P.H."/>
            <person name="Lehmann R."/>
            <person name="Baumgart C."/>
            <person name="Parra G."/>
            <person name="Abril J.F."/>
            <person name="Guigo R."/>
            <person name="Kumpf K."/>
            <person name="Tunggal B."/>
            <person name="Cox E.C."/>
            <person name="Quail M.A."/>
            <person name="Platzer M."/>
            <person name="Rosenthal A."/>
            <person name="Noegel A.A."/>
        </authorList>
    </citation>
    <scope>NUCLEOTIDE SEQUENCE [LARGE SCALE GENOMIC DNA]</scope>
    <source>
        <strain>AX4</strain>
    </source>
</reference>
<reference key="2">
    <citation type="journal article" date="2005" name="Nature">
        <title>The genome of the social amoeba Dictyostelium discoideum.</title>
        <authorList>
            <person name="Eichinger L."/>
            <person name="Pachebat J.A."/>
            <person name="Gloeckner G."/>
            <person name="Rajandream M.A."/>
            <person name="Sucgang R."/>
            <person name="Berriman M."/>
            <person name="Song J."/>
            <person name="Olsen R."/>
            <person name="Szafranski K."/>
            <person name="Xu Q."/>
            <person name="Tunggal B."/>
            <person name="Kummerfeld S."/>
            <person name="Madera M."/>
            <person name="Konfortov B.A."/>
            <person name="Rivero F."/>
            <person name="Bankier A.T."/>
            <person name="Lehmann R."/>
            <person name="Hamlin N."/>
            <person name="Davies R."/>
            <person name="Gaudet P."/>
            <person name="Fey P."/>
            <person name="Pilcher K."/>
            <person name="Chen G."/>
            <person name="Saunders D."/>
            <person name="Sodergren E.J."/>
            <person name="Davis P."/>
            <person name="Kerhornou A."/>
            <person name="Nie X."/>
            <person name="Hall N."/>
            <person name="Anjard C."/>
            <person name="Hemphill L."/>
            <person name="Bason N."/>
            <person name="Farbrother P."/>
            <person name="Desany B."/>
            <person name="Just E."/>
            <person name="Morio T."/>
            <person name="Rost R."/>
            <person name="Churcher C.M."/>
            <person name="Cooper J."/>
            <person name="Haydock S."/>
            <person name="van Driessche N."/>
            <person name="Cronin A."/>
            <person name="Goodhead I."/>
            <person name="Muzny D.M."/>
            <person name="Mourier T."/>
            <person name="Pain A."/>
            <person name="Lu M."/>
            <person name="Harper D."/>
            <person name="Lindsay R."/>
            <person name="Hauser H."/>
            <person name="James K.D."/>
            <person name="Quiles M."/>
            <person name="Madan Babu M."/>
            <person name="Saito T."/>
            <person name="Buchrieser C."/>
            <person name="Wardroper A."/>
            <person name="Felder M."/>
            <person name="Thangavelu M."/>
            <person name="Johnson D."/>
            <person name="Knights A."/>
            <person name="Loulseged H."/>
            <person name="Mungall K.L."/>
            <person name="Oliver K."/>
            <person name="Price C."/>
            <person name="Quail M.A."/>
            <person name="Urushihara H."/>
            <person name="Hernandez J."/>
            <person name="Rabbinowitsch E."/>
            <person name="Steffen D."/>
            <person name="Sanders M."/>
            <person name="Ma J."/>
            <person name="Kohara Y."/>
            <person name="Sharp S."/>
            <person name="Simmonds M.N."/>
            <person name="Spiegler S."/>
            <person name="Tivey A."/>
            <person name="Sugano S."/>
            <person name="White B."/>
            <person name="Walker D."/>
            <person name="Woodward J.R."/>
            <person name="Winckler T."/>
            <person name="Tanaka Y."/>
            <person name="Shaulsky G."/>
            <person name="Schleicher M."/>
            <person name="Weinstock G.M."/>
            <person name="Rosenthal A."/>
            <person name="Cox E.C."/>
            <person name="Chisholm R.L."/>
            <person name="Gibbs R.A."/>
            <person name="Loomis W.F."/>
            <person name="Platzer M."/>
            <person name="Kay R.R."/>
            <person name="Williams J.G."/>
            <person name="Dear P.H."/>
            <person name="Noegel A.A."/>
            <person name="Barrell B.G."/>
            <person name="Kuspa A."/>
        </authorList>
    </citation>
    <scope>NUCLEOTIDE SEQUENCE [LARGE SCALE GENOMIC DNA]</scope>
    <source>
        <strain>AX4</strain>
    </source>
</reference>
<reference key="3">
    <citation type="journal article" date="2010" name="Mol. Biol. Rep.">
        <title>Single and multiple CH (calponin homology) domain containing multidomain proteins in Dictyostelium discoideum: an inventory.</title>
        <authorList>
            <person name="Friedberg F."/>
            <person name="Rivero F."/>
        </authorList>
    </citation>
    <scope>IDENTIFICATION</scope>
</reference>
<evidence type="ECO:0000255" key="1"/>
<evidence type="ECO:0000255" key="2">
    <source>
        <dbReference type="PROSITE-ProRule" id="PRU00044"/>
    </source>
</evidence>
<evidence type="ECO:0000256" key="3">
    <source>
        <dbReference type="SAM" id="MobiDB-lite"/>
    </source>
</evidence>
<organism>
    <name type="scientific">Dictyostelium discoideum</name>
    <name type="common">Social amoeba</name>
    <dbReference type="NCBI Taxonomy" id="44689"/>
    <lineage>
        <taxon>Eukaryota</taxon>
        <taxon>Amoebozoa</taxon>
        <taxon>Evosea</taxon>
        <taxon>Eumycetozoa</taxon>
        <taxon>Dictyostelia</taxon>
        <taxon>Dictyosteliales</taxon>
        <taxon>Dictyosteliaceae</taxon>
        <taxon>Dictyostelium</taxon>
    </lineage>
</organism>
<keyword id="KW-0175">Coiled coil</keyword>
<keyword id="KW-1185">Reference proteome</keyword>
<dbReference type="EMBL" id="AAFI02000008">
    <property type="protein sequence ID" value="EAL71388.1"/>
    <property type="molecule type" value="Genomic_DNA"/>
</dbReference>
<dbReference type="RefSeq" id="XP_645312.1">
    <property type="nucleotide sequence ID" value="XM_640220.1"/>
</dbReference>
<dbReference type="SMR" id="Q75JP5"/>
<dbReference type="FunCoup" id="Q75JP5">
    <property type="interactions" value="108"/>
</dbReference>
<dbReference type="PaxDb" id="44689-DDB0232246"/>
<dbReference type="EnsemblProtists" id="EAL71388">
    <property type="protein sequence ID" value="EAL71388"/>
    <property type="gene ID" value="DDB_G0272472"/>
</dbReference>
<dbReference type="GeneID" id="8618478"/>
<dbReference type="KEGG" id="ddi:DDB_G0272472"/>
<dbReference type="dictyBase" id="DDB_G0272472"/>
<dbReference type="VEuPathDB" id="AmoebaDB:DDB_G0272472"/>
<dbReference type="HOGENOM" id="CLU_248345_0_0_1"/>
<dbReference type="InParanoid" id="Q75JP5"/>
<dbReference type="OMA" id="GDFHEKQ"/>
<dbReference type="PRO" id="PR:Q75JP5"/>
<dbReference type="Proteomes" id="UP000002195">
    <property type="component" value="Chromosome 2"/>
</dbReference>
<dbReference type="Gene3D" id="1.10.418.10">
    <property type="entry name" value="Calponin-like domain"/>
    <property type="match status" value="1"/>
</dbReference>
<dbReference type="InterPro" id="IPR001715">
    <property type="entry name" value="CH_dom"/>
</dbReference>
<dbReference type="InterPro" id="IPR036872">
    <property type="entry name" value="CH_dom_sf"/>
</dbReference>
<dbReference type="PANTHER" id="PTHR11915">
    <property type="entry name" value="SPECTRIN/FILAMIN RELATED CYTOSKELETAL PROTEIN"/>
    <property type="match status" value="1"/>
</dbReference>
<dbReference type="Pfam" id="PF00307">
    <property type="entry name" value="CH"/>
    <property type="match status" value="1"/>
</dbReference>
<dbReference type="SMART" id="SM00033">
    <property type="entry name" value="CH"/>
    <property type="match status" value="1"/>
</dbReference>
<dbReference type="SUPFAM" id="SSF47576">
    <property type="entry name" value="Calponin-homology domain, CH-domain"/>
    <property type="match status" value="1"/>
</dbReference>
<dbReference type="PROSITE" id="PS50021">
    <property type="entry name" value="CH"/>
    <property type="match status" value="1"/>
</dbReference>
<gene>
    <name type="ORF">DDB_G0272472</name>
</gene>
<feature type="chain" id="PRO_0000391604" description="Calponin homology domain-containing protein DDB_G0272472">
    <location>
        <begin position="1"/>
        <end position="1508"/>
    </location>
</feature>
<feature type="domain" description="Calponin-homology (CH)" evidence="2">
    <location>
        <begin position="1397"/>
        <end position="1504"/>
    </location>
</feature>
<feature type="region of interest" description="Disordered" evidence="3">
    <location>
        <begin position="1"/>
        <end position="165"/>
    </location>
</feature>
<feature type="region of interest" description="Disordered" evidence="3">
    <location>
        <begin position="197"/>
        <end position="290"/>
    </location>
</feature>
<feature type="region of interest" description="Disordered" evidence="3">
    <location>
        <begin position="309"/>
        <end position="518"/>
    </location>
</feature>
<feature type="region of interest" description="Disordered" evidence="3">
    <location>
        <begin position="531"/>
        <end position="561"/>
    </location>
</feature>
<feature type="region of interest" description="Disordered" evidence="3">
    <location>
        <begin position="680"/>
        <end position="706"/>
    </location>
</feature>
<feature type="region of interest" description="Disordered" evidence="3">
    <location>
        <begin position="1036"/>
        <end position="1391"/>
    </location>
</feature>
<feature type="coiled-coil region" evidence="1">
    <location>
        <begin position="455"/>
        <end position="498"/>
    </location>
</feature>
<feature type="compositionally biased region" description="Low complexity" evidence="3">
    <location>
        <begin position="81"/>
        <end position="107"/>
    </location>
</feature>
<feature type="compositionally biased region" description="Basic and acidic residues" evidence="3">
    <location>
        <begin position="208"/>
        <end position="222"/>
    </location>
</feature>
<feature type="compositionally biased region" description="Low complexity" evidence="3">
    <location>
        <begin position="234"/>
        <end position="251"/>
    </location>
</feature>
<feature type="compositionally biased region" description="Low complexity" evidence="3">
    <location>
        <begin position="263"/>
        <end position="290"/>
    </location>
</feature>
<feature type="compositionally biased region" description="Low complexity" evidence="3">
    <location>
        <begin position="315"/>
        <end position="332"/>
    </location>
</feature>
<feature type="compositionally biased region" description="Basic and acidic residues" evidence="3">
    <location>
        <begin position="337"/>
        <end position="346"/>
    </location>
</feature>
<feature type="compositionally biased region" description="Basic and acidic residues" evidence="3">
    <location>
        <begin position="362"/>
        <end position="371"/>
    </location>
</feature>
<feature type="compositionally biased region" description="Polar residues" evidence="3">
    <location>
        <begin position="380"/>
        <end position="391"/>
    </location>
</feature>
<feature type="compositionally biased region" description="Low complexity" evidence="3">
    <location>
        <begin position="395"/>
        <end position="438"/>
    </location>
</feature>
<feature type="compositionally biased region" description="Polar residues" evidence="3">
    <location>
        <begin position="439"/>
        <end position="452"/>
    </location>
</feature>
<feature type="compositionally biased region" description="Basic and acidic residues" evidence="3">
    <location>
        <begin position="465"/>
        <end position="498"/>
    </location>
</feature>
<feature type="compositionally biased region" description="Low complexity" evidence="3">
    <location>
        <begin position="500"/>
        <end position="516"/>
    </location>
</feature>
<feature type="compositionally biased region" description="Low complexity" evidence="3">
    <location>
        <begin position="531"/>
        <end position="557"/>
    </location>
</feature>
<feature type="compositionally biased region" description="Basic and acidic residues" evidence="3">
    <location>
        <begin position="1036"/>
        <end position="1164"/>
    </location>
</feature>
<feature type="compositionally biased region" description="Low complexity" evidence="3">
    <location>
        <begin position="1165"/>
        <end position="1181"/>
    </location>
</feature>
<feature type="compositionally biased region" description="Low complexity" evidence="3">
    <location>
        <begin position="1189"/>
        <end position="1206"/>
    </location>
</feature>
<feature type="compositionally biased region" description="Basic residues" evidence="3">
    <location>
        <begin position="1216"/>
        <end position="1225"/>
    </location>
</feature>
<feature type="compositionally biased region" description="Basic and acidic residues" evidence="3">
    <location>
        <begin position="1226"/>
        <end position="1235"/>
    </location>
</feature>
<feature type="compositionally biased region" description="Low complexity" evidence="3">
    <location>
        <begin position="1333"/>
        <end position="1355"/>
    </location>
</feature>
<feature type="compositionally biased region" description="Polar residues" evidence="3">
    <location>
        <begin position="1362"/>
        <end position="1374"/>
    </location>
</feature>
<accession>Q75JP5</accession>
<accession>Q559M2</accession>
<protein>
    <recommendedName>
        <fullName>Calponin homology domain-containing protein DDB_G0272472</fullName>
    </recommendedName>
</protein>
<proteinExistence type="predicted"/>
<name>Y2471_DICDI</name>